<proteinExistence type="inferred from homology"/>
<evidence type="ECO:0000255" key="1">
    <source>
        <dbReference type="HAMAP-Rule" id="MF_00334"/>
    </source>
</evidence>
<protein>
    <recommendedName>
        <fullName evidence="1">Homogentisate 1,2-dioxygenase</fullName>
        <shortName evidence="1">HGDO</shortName>
        <ecNumber evidence="1">1.13.11.5</ecNumber>
    </recommendedName>
    <alternativeName>
        <fullName evidence="1">Homogentisate oxygenase</fullName>
    </alternativeName>
    <alternativeName>
        <fullName evidence="1">Homogentisic acid oxidase</fullName>
    </alternativeName>
    <alternativeName>
        <fullName evidence="1">Homogentisicase</fullName>
    </alternativeName>
</protein>
<comment type="function">
    <text evidence="1">Involved in the catabolism of homogentisate (2,5-dihydroxyphenylacetate or 2,5-OH-PhAc), a central intermediate in the degradation of phenylalanine and tyrosine. Catalyzes the oxidative ring cleavage of the aromatic ring of homogentisate to yield maleylacetoacetate.</text>
</comment>
<comment type="catalytic activity">
    <reaction evidence="1">
        <text>homogentisate + O2 = 4-maleylacetoacetate + H(+)</text>
        <dbReference type="Rhea" id="RHEA:15449"/>
        <dbReference type="ChEBI" id="CHEBI:15378"/>
        <dbReference type="ChEBI" id="CHEBI:15379"/>
        <dbReference type="ChEBI" id="CHEBI:16169"/>
        <dbReference type="ChEBI" id="CHEBI:17105"/>
        <dbReference type="EC" id="1.13.11.5"/>
    </reaction>
</comment>
<comment type="cofactor">
    <cofactor evidence="1">
        <name>Fe cation</name>
        <dbReference type="ChEBI" id="CHEBI:24875"/>
    </cofactor>
</comment>
<comment type="pathway">
    <text evidence="1">Amino-acid degradation; L-phenylalanine degradation; acetoacetate and fumarate from L-phenylalanine: step 4/6.</text>
</comment>
<comment type="subunit">
    <text evidence="1">Hexamer; dimer of trimers.</text>
</comment>
<comment type="similarity">
    <text evidence="1">Belongs to the homogentisate dioxygenase family.</text>
</comment>
<organism>
    <name type="scientific">Burkholderia mallei (strain NCTC 10229)</name>
    <dbReference type="NCBI Taxonomy" id="412022"/>
    <lineage>
        <taxon>Bacteria</taxon>
        <taxon>Pseudomonadati</taxon>
        <taxon>Pseudomonadota</taxon>
        <taxon>Betaproteobacteria</taxon>
        <taxon>Burkholderiales</taxon>
        <taxon>Burkholderiaceae</taxon>
        <taxon>Burkholderia</taxon>
        <taxon>pseudomallei group</taxon>
    </lineage>
</organism>
<reference key="1">
    <citation type="journal article" date="2010" name="Genome Biol. Evol.">
        <title>Continuing evolution of Burkholderia mallei through genome reduction and large-scale rearrangements.</title>
        <authorList>
            <person name="Losada L."/>
            <person name="Ronning C.M."/>
            <person name="DeShazer D."/>
            <person name="Woods D."/>
            <person name="Fedorova N."/>
            <person name="Kim H.S."/>
            <person name="Shabalina S.A."/>
            <person name="Pearson T.R."/>
            <person name="Brinkac L."/>
            <person name="Tan P."/>
            <person name="Nandi T."/>
            <person name="Crabtree J."/>
            <person name="Badger J."/>
            <person name="Beckstrom-Sternberg S."/>
            <person name="Saqib M."/>
            <person name="Schutzer S.E."/>
            <person name="Keim P."/>
            <person name="Nierman W.C."/>
        </authorList>
    </citation>
    <scope>NUCLEOTIDE SEQUENCE [LARGE SCALE GENOMIC DNA]</scope>
    <source>
        <strain>NCTC 10229</strain>
    </source>
</reference>
<gene>
    <name evidence="1" type="primary">hmgA</name>
    <name type="ordered locus">BMA10229_A2688</name>
</gene>
<feature type="chain" id="PRO_1000019525" description="Homogentisate 1,2-dioxygenase">
    <location>
        <begin position="1"/>
        <end position="450"/>
    </location>
</feature>
<feature type="active site" description="Proton acceptor" evidence="1">
    <location>
        <position position="304"/>
    </location>
</feature>
<feature type="binding site" evidence="1">
    <location>
        <position position="347"/>
    </location>
    <ligand>
        <name>Fe cation</name>
        <dbReference type="ChEBI" id="CHEBI:24875"/>
    </ligand>
</feature>
<feature type="binding site" evidence="1">
    <location>
        <position position="353"/>
    </location>
    <ligand>
        <name>Fe cation</name>
        <dbReference type="ChEBI" id="CHEBI:24875"/>
    </ligand>
</feature>
<feature type="binding site" evidence="1">
    <location>
        <position position="362"/>
    </location>
    <ligand>
        <name>homogentisate</name>
        <dbReference type="ChEBI" id="CHEBI:16169"/>
    </ligand>
</feature>
<feature type="binding site" evidence="1">
    <location>
        <position position="383"/>
    </location>
    <ligand>
        <name>Fe cation</name>
        <dbReference type="ChEBI" id="CHEBI:24875"/>
    </ligand>
</feature>
<feature type="binding site" evidence="1">
    <location>
        <position position="383"/>
    </location>
    <ligand>
        <name>homogentisate</name>
        <dbReference type="ChEBI" id="CHEBI:16169"/>
    </ligand>
</feature>
<keyword id="KW-0223">Dioxygenase</keyword>
<keyword id="KW-0408">Iron</keyword>
<keyword id="KW-0479">Metal-binding</keyword>
<keyword id="KW-0560">Oxidoreductase</keyword>
<keyword id="KW-0585">Phenylalanine catabolism</keyword>
<keyword id="KW-0828">Tyrosine catabolism</keyword>
<dbReference type="EC" id="1.13.11.5" evidence="1"/>
<dbReference type="EMBL" id="CP000546">
    <property type="protein sequence ID" value="ABN03848.1"/>
    <property type="molecule type" value="Genomic_DNA"/>
</dbReference>
<dbReference type="SMR" id="A2S9M1"/>
<dbReference type="KEGG" id="bml:BMA10229_A2688"/>
<dbReference type="HOGENOM" id="CLU_027174_0_0_4"/>
<dbReference type="UniPathway" id="UPA00139">
    <property type="reaction ID" value="UER00339"/>
</dbReference>
<dbReference type="Proteomes" id="UP000002283">
    <property type="component" value="Chromosome I"/>
</dbReference>
<dbReference type="GO" id="GO:0005737">
    <property type="term" value="C:cytoplasm"/>
    <property type="evidence" value="ECO:0007669"/>
    <property type="project" value="TreeGrafter"/>
</dbReference>
<dbReference type="GO" id="GO:0004411">
    <property type="term" value="F:homogentisate 1,2-dioxygenase activity"/>
    <property type="evidence" value="ECO:0007669"/>
    <property type="project" value="UniProtKB-UniRule"/>
</dbReference>
<dbReference type="GO" id="GO:0005506">
    <property type="term" value="F:iron ion binding"/>
    <property type="evidence" value="ECO:0007669"/>
    <property type="project" value="UniProtKB-UniRule"/>
</dbReference>
<dbReference type="GO" id="GO:0006559">
    <property type="term" value="P:L-phenylalanine catabolic process"/>
    <property type="evidence" value="ECO:0007669"/>
    <property type="project" value="UniProtKB-UniRule"/>
</dbReference>
<dbReference type="GO" id="GO:0006572">
    <property type="term" value="P:tyrosine catabolic process"/>
    <property type="evidence" value="ECO:0007669"/>
    <property type="project" value="UniProtKB-UniRule"/>
</dbReference>
<dbReference type="CDD" id="cd07000">
    <property type="entry name" value="cupin_HGO_N"/>
    <property type="match status" value="1"/>
</dbReference>
<dbReference type="FunFam" id="2.60.120.10:FF:000034">
    <property type="entry name" value="Homogentisate 1,2-dioxygenase"/>
    <property type="match status" value="1"/>
</dbReference>
<dbReference type="Gene3D" id="2.60.120.10">
    <property type="entry name" value="Jelly Rolls"/>
    <property type="match status" value="1"/>
</dbReference>
<dbReference type="HAMAP" id="MF_00334">
    <property type="entry name" value="Homogentis_dioxygen"/>
    <property type="match status" value="1"/>
</dbReference>
<dbReference type="InterPro" id="IPR046451">
    <property type="entry name" value="HgmA_C"/>
</dbReference>
<dbReference type="InterPro" id="IPR046452">
    <property type="entry name" value="HgmA_N"/>
</dbReference>
<dbReference type="InterPro" id="IPR005708">
    <property type="entry name" value="Homogentis_dOase"/>
</dbReference>
<dbReference type="InterPro" id="IPR022950">
    <property type="entry name" value="Homogentis_dOase_bac"/>
</dbReference>
<dbReference type="InterPro" id="IPR014710">
    <property type="entry name" value="RmlC-like_jellyroll"/>
</dbReference>
<dbReference type="InterPro" id="IPR011051">
    <property type="entry name" value="RmlC_Cupin_sf"/>
</dbReference>
<dbReference type="NCBIfam" id="TIGR01015">
    <property type="entry name" value="hmgA"/>
    <property type="match status" value="1"/>
</dbReference>
<dbReference type="PANTHER" id="PTHR11056">
    <property type="entry name" value="HOMOGENTISATE 1,2-DIOXYGENASE"/>
    <property type="match status" value="1"/>
</dbReference>
<dbReference type="PANTHER" id="PTHR11056:SF0">
    <property type="entry name" value="HOMOGENTISATE 1,2-DIOXYGENASE"/>
    <property type="match status" value="1"/>
</dbReference>
<dbReference type="Pfam" id="PF04209">
    <property type="entry name" value="HgmA_C"/>
    <property type="match status" value="1"/>
</dbReference>
<dbReference type="Pfam" id="PF20510">
    <property type="entry name" value="HgmA_N"/>
    <property type="match status" value="1"/>
</dbReference>
<dbReference type="SUPFAM" id="SSF51182">
    <property type="entry name" value="RmlC-like cupins"/>
    <property type="match status" value="1"/>
</dbReference>
<name>HGD_BURM9</name>
<sequence>MERTTIMTLDFSKPGEAGYQSGFANEFATEALPGALPHARNSPQRAPYGLYAEQFSGTAFTAPRGHNRRSWLYRIRPAAVHRPFELVSGERRIVAEFGDSDDVPPTPPNQLRWDPLPMPAQPTDFVDGWVTMAGNGSAAAMSGCAIHLYAANRSMRERFFYSADGELLIVPQEGRLFIMTELGRLDVEPFEIAVIPRGVRFAVALPDGRARGYVCENFGALLRLPDLGPIGSNGLANPRDFLTPHASYEDREGAFELVAKLNGRLWRADIDHSPFDVVAWHGNYAPYKYDLRHFNTIGSISYDHPDPSIFLVLQSQSDTPGVDAIDFVIFPPRWLAAEDTFRPPWFHRNVASEFMGLVHGVYDAKAEGFVPGGASLHNCMSGHGPDADTFEKASSIDTSKPNKVGDTMAFMFETRTLIRPTRFALDTAQLQANYFECWQGLKKHFNPEQR</sequence>
<accession>A2S9M1</accession>